<sequence>METWQEVTVHVHRDAQEAVSHVLIETGSQGVAIADSADYIGQKDRFGELYPDVEQSDMIAITAYYPSSTNLADVTVTINEQLAELASFGLQVGQVTVDSQELAEEDWADNWKKYYEPARITHDLTIVPSWTDYDASAGEKVIKLDPGMAFGTGTHPTTKMSLFAVEQILRGGETVIDVGTGSGVLSIASSLLGAKTIYAYDLDDVAVRVAQENIDLNQGTDNIHVAAGDLLKGVSQEADVIVANILADILVLLTDDAYRLVKDQGYLILSGIISEKLDMVLEAAFSAGFFLETHMIQGEWNALVFKKTDDISGVIGG</sequence>
<keyword id="KW-0963">Cytoplasm</keyword>
<keyword id="KW-0489">Methyltransferase</keyword>
<keyword id="KW-0949">S-adenosyl-L-methionine</keyword>
<keyword id="KW-0808">Transferase</keyword>
<name>PRMA_STRPF</name>
<gene>
    <name evidence="1" type="primary">prmA</name>
    <name type="ordered locus">MGAS10750_Spy1786</name>
</gene>
<accession>Q1J4K0</accession>
<proteinExistence type="inferred from homology"/>
<comment type="function">
    <text evidence="1">Methylates ribosomal protein L11.</text>
</comment>
<comment type="catalytic activity">
    <reaction evidence="1">
        <text>L-lysyl-[protein] + 3 S-adenosyl-L-methionine = N(6),N(6),N(6)-trimethyl-L-lysyl-[protein] + 3 S-adenosyl-L-homocysteine + 3 H(+)</text>
        <dbReference type="Rhea" id="RHEA:54192"/>
        <dbReference type="Rhea" id="RHEA-COMP:9752"/>
        <dbReference type="Rhea" id="RHEA-COMP:13826"/>
        <dbReference type="ChEBI" id="CHEBI:15378"/>
        <dbReference type="ChEBI" id="CHEBI:29969"/>
        <dbReference type="ChEBI" id="CHEBI:57856"/>
        <dbReference type="ChEBI" id="CHEBI:59789"/>
        <dbReference type="ChEBI" id="CHEBI:61961"/>
    </reaction>
</comment>
<comment type="subcellular location">
    <subcellularLocation>
        <location evidence="1">Cytoplasm</location>
    </subcellularLocation>
</comment>
<comment type="similarity">
    <text evidence="1">Belongs to the methyltransferase superfamily. PrmA family.</text>
</comment>
<reference key="1">
    <citation type="journal article" date="2006" name="Proc. Natl. Acad. Sci. U.S.A.">
        <title>Molecular genetic anatomy of inter- and intraserotype variation in the human bacterial pathogen group A Streptococcus.</title>
        <authorList>
            <person name="Beres S.B."/>
            <person name="Richter E.W."/>
            <person name="Nagiec M.J."/>
            <person name="Sumby P."/>
            <person name="Porcella S.F."/>
            <person name="DeLeo F.R."/>
            <person name="Musser J.M."/>
        </authorList>
    </citation>
    <scope>NUCLEOTIDE SEQUENCE [LARGE SCALE GENOMIC DNA]</scope>
    <source>
        <strain>MGAS10750</strain>
    </source>
</reference>
<feature type="chain" id="PRO_1000046108" description="Ribosomal protein L11 methyltransferase">
    <location>
        <begin position="1"/>
        <end position="317"/>
    </location>
</feature>
<feature type="binding site" evidence="1">
    <location>
        <position position="158"/>
    </location>
    <ligand>
        <name>S-adenosyl-L-methionine</name>
        <dbReference type="ChEBI" id="CHEBI:59789"/>
    </ligand>
</feature>
<feature type="binding site" evidence="1">
    <location>
        <position position="179"/>
    </location>
    <ligand>
        <name>S-adenosyl-L-methionine</name>
        <dbReference type="ChEBI" id="CHEBI:59789"/>
    </ligand>
</feature>
<feature type="binding site" evidence="1">
    <location>
        <position position="201"/>
    </location>
    <ligand>
        <name>S-adenosyl-L-methionine</name>
        <dbReference type="ChEBI" id="CHEBI:59789"/>
    </ligand>
</feature>
<feature type="binding site" evidence="1">
    <location>
        <position position="244"/>
    </location>
    <ligand>
        <name>S-adenosyl-L-methionine</name>
        <dbReference type="ChEBI" id="CHEBI:59789"/>
    </ligand>
</feature>
<protein>
    <recommendedName>
        <fullName evidence="1">Ribosomal protein L11 methyltransferase</fullName>
        <shortName evidence="1">L11 Mtase</shortName>
        <ecNumber evidence="1">2.1.1.-</ecNumber>
    </recommendedName>
</protein>
<evidence type="ECO:0000255" key="1">
    <source>
        <dbReference type="HAMAP-Rule" id="MF_00735"/>
    </source>
</evidence>
<dbReference type="EC" id="2.1.1.-" evidence="1"/>
<dbReference type="EMBL" id="CP000262">
    <property type="protein sequence ID" value="ABF38736.1"/>
    <property type="molecule type" value="Genomic_DNA"/>
</dbReference>
<dbReference type="SMR" id="Q1J4K0"/>
<dbReference type="KEGG" id="spi:MGAS10750_Spy1786"/>
<dbReference type="HOGENOM" id="CLU_049382_0_1_9"/>
<dbReference type="Proteomes" id="UP000002434">
    <property type="component" value="Chromosome"/>
</dbReference>
<dbReference type="GO" id="GO:0005737">
    <property type="term" value="C:cytoplasm"/>
    <property type="evidence" value="ECO:0007669"/>
    <property type="project" value="UniProtKB-SubCell"/>
</dbReference>
<dbReference type="GO" id="GO:0016279">
    <property type="term" value="F:protein-lysine N-methyltransferase activity"/>
    <property type="evidence" value="ECO:0007669"/>
    <property type="project" value="RHEA"/>
</dbReference>
<dbReference type="GO" id="GO:0032259">
    <property type="term" value="P:methylation"/>
    <property type="evidence" value="ECO:0007669"/>
    <property type="project" value="UniProtKB-KW"/>
</dbReference>
<dbReference type="CDD" id="cd02440">
    <property type="entry name" value="AdoMet_MTases"/>
    <property type="match status" value="1"/>
</dbReference>
<dbReference type="Gene3D" id="3.40.50.150">
    <property type="entry name" value="Vaccinia Virus protein VP39"/>
    <property type="match status" value="1"/>
</dbReference>
<dbReference type="HAMAP" id="MF_00735">
    <property type="entry name" value="Methyltr_PrmA"/>
    <property type="match status" value="1"/>
</dbReference>
<dbReference type="InterPro" id="IPR050078">
    <property type="entry name" value="Ribosomal_L11_MeTrfase_PrmA"/>
</dbReference>
<dbReference type="InterPro" id="IPR004498">
    <property type="entry name" value="Ribosomal_PrmA_MeTrfase"/>
</dbReference>
<dbReference type="InterPro" id="IPR029063">
    <property type="entry name" value="SAM-dependent_MTases_sf"/>
</dbReference>
<dbReference type="NCBIfam" id="TIGR00406">
    <property type="entry name" value="prmA"/>
    <property type="match status" value="1"/>
</dbReference>
<dbReference type="PANTHER" id="PTHR43648">
    <property type="entry name" value="ELECTRON TRANSFER FLAVOPROTEIN BETA SUBUNIT LYSINE METHYLTRANSFERASE"/>
    <property type="match status" value="1"/>
</dbReference>
<dbReference type="PANTHER" id="PTHR43648:SF1">
    <property type="entry name" value="ELECTRON TRANSFER FLAVOPROTEIN BETA SUBUNIT LYSINE METHYLTRANSFERASE"/>
    <property type="match status" value="1"/>
</dbReference>
<dbReference type="Pfam" id="PF06325">
    <property type="entry name" value="PrmA"/>
    <property type="match status" value="1"/>
</dbReference>
<dbReference type="PIRSF" id="PIRSF000401">
    <property type="entry name" value="RPL11_MTase"/>
    <property type="match status" value="1"/>
</dbReference>
<dbReference type="SUPFAM" id="SSF53335">
    <property type="entry name" value="S-adenosyl-L-methionine-dependent methyltransferases"/>
    <property type="match status" value="1"/>
</dbReference>
<organism>
    <name type="scientific">Streptococcus pyogenes serotype M4 (strain MGAS10750)</name>
    <dbReference type="NCBI Taxonomy" id="370554"/>
    <lineage>
        <taxon>Bacteria</taxon>
        <taxon>Bacillati</taxon>
        <taxon>Bacillota</taxon>
        <taxon>Bacilli</taxon>
        <taxon>Lactobacillales</taxon>
        <taxon>Streptococcaceae</taxon>
        <taxon>Streptococcus</taxon>
    </lineage>
</organism>